<protein>
    <recommendedName>
        <fullName evidence="1">Glycerol-3-phosphate acyltransferase</fullName>
    </recommendedName>
    <alternativeName>
        <fullName evidence="1">Acyl-PO4 G3P acyltransferase</fullName>
    </alternativeName>
    <alternativeName>
        <fullName evidence="1">Acyl-phosphate--glycerol-3-phosphate acyltransferase</fullName>
    </alternativeName>
    <alternativeName>
        <fullName evidence="1">G3P acyltransferase</fullName>
        <shortName evidence="1">GPAT</shortName>
        <ecNumber evidence="1">2.3.1.275</ecNumber>
    </alternativeName>
    <alternativeName>
        <fullName evidence="1">Lysophosphatidic acid synthase</fullName>
        <shortName evidence="1">LPA synthase</shortName>
    </alternativeName>
</protein>
<evidence type="ECO:0000255" key="1">
    <source>
        <dbReference type="HAMAP-Rule" id="MF_01043"/>
    </source>
</evidence>
<keyword id="KW-0997">Cell inner membrane</keyword>
<keyword id="KW-1003">Cell membrane</keyword>
<keyword id="KW-0444">Lipid biosynthesis</keyword>
<keyword id="KW-0443">Lipid metabolism</keyword>
<keyword id="KW-0472">Membrane</keyword>
<keyword id="KW-0594">Phospholipid biosynthesis</keyword>
<keyword id="KW-1208">Phospholipid metabolism</keyword>
<keyword id="KW-0808">Transferase</keyword>
<keyword id="KW-0812">Transmembrane</keyword>
<keyword id="KW-1133">Transmembrane helix</keyword>
<name>PLSY_YERP3</name>
<comment type="function">
    <text evidence="1">Catalyzes the transfer of an acyl group from acyl-phosphate (acyl-PO(4)) to glycerol-3-phosphate (G3P) to form lysophosphatidic acid (LPA). This enzyme utilizes acyl-phosphate as fatty acyl donor, but not acyl-CoA or acyl-ACP.</text>
</comment>
<comment type="catalytic activity">
    <reaction evidence="1">
        <text>an acyl phosphate + sn-glycerol 3-phosphate = a 1-acyl-sn-glycero-3-phosphate + phosphate</text>
        <dbReference type="Rhea" id="RHEA:34075"/>
        <dbReference type="ChEBI" id="CHEBI:43474"/>
        <dbReference type="ChEBI" id="CHEBI:57597"/>
        <dbReference type="ChEBI" id="CHEBI:57970"/>
        <dbReference type="ChEBI" id="CHEBI:59918"/>
        <dbReference type="EC" id="2.3.1.275"/>
    </reaction>
</comment>
<comment type="pathway">
    <text evidence="1">Lipid metabolism; phospholipid metabolism.</text>
</comment>
<comment type="subunit">
    <text evidence="1">Probably interacts with PlsX.</text>
</comment>
<comment type="subcellular location">
    <subcellularLocation>
        <location evidence="1">Cell inner membrane</location>
        <topology evidence="1">Multi-pass membrane protein</topology>
    </subcellularLocation>
</comment>
<comment type="similarity">
    <text evidence="1">Belongs to the PlsY family.</text>
</comment>
<proteinExistence type="inferred from homology"/>
<accession>A7FE72</accession>
<reference key="1">
    <citation type="journal article" date="2007" name="PLoS Genet.">
        <title>The complete genome sequence of Yersinia pseudotuberculosis IP31758, the causative agent of Far East scarlet-like fever.</title>
        <authorList>
            <person name="Eppinger M."/>
            <person name="Rosovitz M.J."/>
            <person name="Fricke W.F."/>
            <person name="Rasko D.A."/>
            <person name="Kokorina G."/>
            <person name="Fayolle C."/>
            <person name="Lindler L.E."/>
            <person name="Carniel E."/>
            <person name="Ravel J."/>
        </authorList>
    </citation>
    <scope>NUCLEOTIDE SEQUENCE [LARGE SCALE GENOMIC DNA]</scope>
    <source>
        <strain>IP 31758</strain>
    </source>
</reference>
<organism>
    <name type="scientific">Yersinia pseudotuberculosis serotype O:1b (strain IP 31758)</name>
    <dbReference type="NCBI Taxonomy" id="349747"/>
    <lineage>
        <taxon>Bacteria</taxon>
        <taxon>Pseudomonadati</taxon>
        <taxon>Pseudomonadota</taxon>
        <taxon>Gammaproteobacteria</taxon>
        <taxon>Enterobacterales</taxon>
        <taxon>Yersiniaceae</taxon>
        <taxon>Yersinia</taxon>
    </lineage>
</organism>
<sequence>MSAIALGMIIFAYLCGSISSAILVCRVARLPDPRTHGSGNPGATNVLRIGGRTAAVAVLLFDILKGMLPVWIAYLLHIPPLYLGLTAIAACLGHIYPVFFHFKGGKGVATAFGAIAPIGWDLTGLMTGTWLLTVLLSGYSSLGAIVSALIAPFYVWWFKPQFTFPVAMLSCLILMRHHDNIQRLWRGKEGKIWDKLRKKKQKTPAEEAAELEEKED</sequence>
<feature type="chain" id="PRO_1000064240" description="Glycerol-3-phosphate acyltransferase">
    <location>
        <begin position="1"/>
        <end position="216"/>
    </location>
</feature>
<feature type="transmembrane region" description="Helical" evidence="1">
    <location>
        <begin position="4"/>
        <end position="24"/>
    </location>
</feature>
<feature type="transmembrane region" description="Helical" evidence="1">
    <location>
        <begin position="56"/>
        <end position="76"/>
    </location>
</feature>
<feature type="transmembrane region" description="Helical" evidence="1">
    <location>
        <begin position="80"/>
        <end position="100"/>
    </location>
</feature>
<feature type="transmembrane region" description="Helical" evidence="1">
    <location>
        <begin position="112"/>
        <end position="132"/>
    </location>
</feature>
<feature type="transmembrane region" description="Helical" evidence="1">
    <location>
        <begin position="138"/>
        <end position="158"/>
    </location>
</feature>
<dbReference type="EC" id="2.3.1.275" evidence="1"/>
<dbReference type="EMBL" id="CP000720">
    <property type="protein sequence ID" value="ABS48253.1"/>
    <property type="molecule type" value="Genomic_DNA"/>
</dbReference>
<dbReference type="RefSeq" id="WP_002217581.1">
    <property type="nucleotide sequence ID" value="NC_009708.1"/>
</dbReference>
<dbReference type="SMR" id="A7FE72"/>
<dbReference type="GeneID" id="57973977"/>
<dbReference type="KEGG" id="ypi:YpsIP31758_0557"/>
<dbReference type="HOGENOM" id="CLU_081254_0_2_6"/>
<dbReference type="UniPathway" id="UPA00085"/>
<dbReference type="Proteomes" id="UP000002412">
    <property type="component" value="Chromosome"/>
</dbReference>
<dbReference type="GO" id="GO:0005886">
    <property type="term" value="C:plasma membrane"/>
    <property type="evidence" value="ECO:0007669"/>
    <property type="project" value="UniProtKB-SubCell"/>
</dbReference>
<dbReference type="GO" id="GO:0043772">
    <property type="term" value="F:acyl-phosphate glycerol-3-phosphate acyltransferase activity"/>
    <property type="evidence" value="ECO:0007669"/>
    <property type="project" value="UniProtKB-UniRule"/>
</dbReference>
<dbReference type="GO" id="GO:0008654">
    <property type="term" value="P:phospholipid biosynthetic process"/>
    <property type="evidence" value="ECO:0007669"/>
    <property type="project" value="UniProtKB-UniRule"/>
</dbReference>
<dbReference type="HAMAP" id="MF_01043">
    <property type="entry name" value="PlsY"/>
    <property type="match status" value="1"/>
</dbReference>
<dbReference type="InterPro" id="IPR003811">
    <property type="entry name" value="G3P_acylTferase_PlsY"/>
</dbReference>
<dbReference type="NCBIfam" id="TIGR00023">
    <property type="entry name" value="glycerol-3-phosphate 1-O-acyltransferase PlsY"/>
    <property type="match status" value="1"/>
</dbReference>
<dbReference type="PANTHER" id="PTHR30309:SF0">
    <property type="entry name" value="GLYCEROL-3-PHOSPHATE ACYLTRANSFERASE-RELATED"/>
    <property type="match status" value="1"/>
</dbReference>
<dbReference type="PANTHER" id="PTHR30309">
    <property type="entry name" value="INNER MEMBRANE PROTEIN YGIH"/>
    <property type="match status" value="1"/>
</dbReference>
<dbReference type="Pfam" id="PF02660">
    <property type="entry name" value="G3P_acyltransf"/>
    <property type="match status" value="1"/>
</dbReference>
<dbReference type="SMART" id="SM01207">
    <property type="entry name" value="G3P_acyltransf"/>
    <property type="match status" value="1"/>
</dbReference>
<gene>
    <name evidence="1" type="primary">plsY</name>
    <name type="ordered locus">YpsIP31758_0557</name>
</gene>